<keyword id="KW-0068">Autocatalytic cleavage</keyword>
<keyword id="KW-0227">DNA damage</keyword>
<keyword id="KW-0234">DNA repair</keyword>
<keyword id="KW-0235">DNA replication</keyword>
<keyword id="KW-0238">DNA-binding</keyword>
<keyword id="KW-0378">Hydrolase</keyword>
<keyword id="KW-1185">Reference proteome</keyword>
<keyword id="KW-0678">Repressor</keyword>
<keyword id="KW-0742">SOS response</keyword>
<keyword id="KW-0804">Transcription</keyword>
<keyword id="KW-0805">Transcription regulation</keyword>
<evidence type="ECO:0000255" key="1">
    <source>
        <dbReference type="HAMAP-Rule" id="MF_00015"/>
    </source>
</evidence>
<feature type="chain" id="PRO_0000322767" description="LexA repressor">
    <location>
        <begin position="1"/>
        <end position="206"/>
    </location>
</feature>
<feature type="DNA-binding region" description="H-T-H motif" evidence="1">
    <location>
        <begin position="27"/>
        <end position="47"/>
    </location>
</feature>
<feature type="active site" description="For autocatalytic cleavage activity" evidence="1">
    <location>
        <position position="120"/>
    </location>
</feature>
<feature type="active site" description="For autocatalytic cleavage activity" evidence="1">
    <location>
        <position position="157"/>
    </location>
</feature>
<feature type="site" description="Cleavage; by autolysis" evidence="1">
    <location>
        <begin position="86"/>
        <end position="87"/>
    </location>
</feature>
<accession>A0LGS1</accession>
<proteinExistence type="inferred from homology"/>
<reference key="1">
    <citation type="submission" date="2006-10" db="EMBL/GenBank/DDBJ databases">
        <title>Complete sequence of Syntrophobacter fumaroxidans MPOB.</title>
        <authorList>
            <consortium name="US DOE Joint Genome Institute"/>
            <person name="Copeland A."/>
            <person name="Lucas S."/>
            <person name="Lapidus A."/>
            <person name="Barry K."/>
            <person name="Detter J.C."/>
            <person name="Glavina del Rio T."/>
            <person name="Hammon N."/>
            <person name="Israni S."/>
            <person name="Pitluck S."/>
            <person name="Goltsman E.G."/>
            <person name="Martinez M."/>
            <person name="Schmutz J."/>
            <person name="Larimer F."/>
            <person name="Land M."/>
            <person name="Hauser L."/>
            <person name="Kyrpides N."/>
            <person name="Kim E."/>
            <person name="Boone D.R."/>
            <person name="Brockman F."/>
            <person name="Culley D."/>
            <person name="Ferry J."/>
            <person name="Gunsalus R."/>
            <person name="McInerney M.J."/>
            <person name="Morrison M."/>
            <person name="Plugge C."/>
            <person name="Rohlin L."/>
            <person name="Scholten J."/>
            <person name="Sieber J."/>
            <person name="Stams A.J.M."/>
            <person name="Worm P."/>
            <person name="Henstra A.M."/>
            <person name="Richardson P."/>
        </authorList>
    </citation>
    <scope>NUCLEOTIDE SEQUENCE [LARGE SCALE GENOMIC DNA]</scope>
    <source>
        <strain>DSM 10017 / MPOB</strain>
    </source>
</reference>
<name>LEXA_SYNFM</name>
<sequence>MNLTPAQERVYGFVRDYIQKNGYSPSYEEIRQNLGFRSLNAVFKHLKQLEQRGYVQSLWKNKKRALELLPLHTGAVSIPFLGVVAAGTPIEAVEIPESVEVPESFLANGNNFALRVKGDSMIEEGIREGDILIVARQSRAENGQTVVALVQGEATVKKFYQRGEEIELRPANSRMQPIHARADAVEVVGTVVGLLRNYRRRSLGVV</sequence>
<comment type="function">
    <text evidence="1">Represses a number of genes involved in the response to DNA damage (SOS response), including recA and lexA. In the presence of single-stranded DNA, RecA interacts with LexA causing an autocatalytic cleavage which disrupts the DNA-binding part of LexA, leading to derepression of the SOS regulon and eventually DNA repair.</text>
</comment>
<comment type="catalytic activity">
    <reaction evidence="1">
        <text>Hydrolysis of Ala-|-Gly bond in repressor LexA.</text>
        <dbReference type="EC" id="3.4.21.88"/>
    </reaction>
</comment>
<comment type="subunit">
    <text evidence="1">Homodimer.</text>
</comment>
<comment type="similarity">
    <text evidence="1">Belongs to the peptidase S24 family.</text>
</comment>
<organism>
    <name type="scientific">Syntrophobacter fumaroxidans (strain DSM 10017 / MPOB)</name>
    <dbReference type="NCBI Taxonomy" id="335543"/>
    <lineage>
        <taxon>Bacteria</taxon>
        <taxon>Pseudomonadati</taxon>
        <taxon>Thermodesulfobacteriota</taxon>
        <taxon>Syntrophobacteria</taxon>
        <taxon>Syntrophobacterales</taxon>
        <taxon>Syntrophobacteraceae</taxon>
        <taxon>Syntrophobacter</taxon>
    </lineage>
</organism>
<protein>
    <recommendedName>
        <fullName evidence="1">LexA repressor</fullName>
        <ecNumber evidence="1">3.4.21.88</ecNumber>
    </recommendedName>
</protein>
<dbReference type="EC" id="3.4.21.88" evidence="1"/>
<dbReference type="EMBL" id="CP000478">
    <property type="protein sequence ID" value="ABK16623.1"/>
    <property type="molecule type" value="Genomic_DNA"/>
</dbReference>
<dbReference type="RefSeq" id="WP_011697794.1">
    <property type="nucleotide sequence ID" value="NC_008554.1"/>
</dbReference>
<dbReference type="SMR" id="A0LGS1"/>
<dbReference type="FunCoup" id="A0LGS1">
    <property type="interactions" value="303"/>
</dbReference>
<dbReference type="STRING" id="335543.Sfum_0927"/>
<dbReference type="MEROPS" id="S24.001"/>
<dbReference type="KEGG" id="sfu:Sfum_0927"/>
<dbReference type="eggNOG" id="COG1974">
    <property type="taxonomic scope" value="Bacteria"/>
</dbReference>
<dbReference type="HOGENOM" id="CLU_066192_45_1_7"/>
<dbReference type="InParanoid" id="A0LGS1"/>
<dbReference type="OrthoDB" id="9802364at2"/>
<dbReference type="Proteomes" id="UP000001784">
    <property type="component" value="Chromosome"/>
</dbReference>
<dbReference type="GO" id="GO:0003677">
    <property type="term" value="F:DNA binding"/>
    <property type="evidence" value="ECO:0007669"/>
    <property type="project" value="UniProtKB-UniRule"/>
</dbReference>
<dbReference type="GO" id="GO:0004252">
    <property type="term" value="F:serine-type endopeptidase activity"/>
    <property type="evidence" value="ECO:0007669"/>
    <property type="project" value="UniProtKB-UniRule"/>
</dbReference>
<dbReference type="GO" id="GO:0006281">
    <property type="term" value="P:DNA repair"/>
    <property type="evidence" value="ECO:0007669"/>
    <property type="project" value="UniProtKB-UniRule"/>
</dbReference>
<dbReference type="GO" id="GO:0006260">
    <property type="term" value="P:DNA replication"/>
    <property type="evidence" value="ECO:0007669"/>
    <property type="project" value="UniProtKB-UniRule"/>
</dbReference>
<dbReference type="GO" id="GO:0045892">
    <property type="term" value="P:negative regulation of DNA-templated transcription"/>
    <property type="evidence" value="ECO:0007669"/>
    <property type="project" value="UniProtKB-UniRule"/>
</dbReference>
<dbReference type="GO" id="GO:0006508">
    <property type="term" value="P:proteolysis"/>
    <property type="evidence" value="ECO:0007669"/>
    <property type="project" value="InterPro"/>
</dbReference>
<dbReference type="GO" id="GO:0009432">
    <property type="term" value="P:SOS response"/>
    <property type="evidence" value="ECO:0007669"/>
    <property type="project" value="UniProtKB-UniRule"/>
</dbReference>
<dbReference type="CDD" id="cd06529">
    <property type="entry name" value="S24_LexA-like"/>
    <property type="match status" value="1"/>
</dbReference>
<dbReference type="FunFam" id="2.10.109.10:FF:000001">
    <property type="entry name" value="LexA repressor"/>
    <property type="match status" value="1"/>
</dbReference>
<dbReference type="Gene3D" id="2.10.109.10">
    <property type="entry name" value="Umud Fragment, subunit A"/>
    <property type="match status" value="1"/>
</dbReference>
<dbReference type="Gene3D" id="1.10.10.10">
    <property type="entry name" value="Winged helix-like DNA-binding domain superfamily/Winged helix DNA-binding domain"/>
    <property type="match status" value="1"/>
</dbReference>
<dbReference type="HAMAP" id="MF_00015">
    <property type="entry name" value="LexA"/>
    <property type="match status" value="1"/>
</dbReference>
<dbReference type="InterPro" id="IPR006200">
    <property type="entry name" value="LexA"/>
</dbReference>
<dbReference type="InterPro" id="IPR039418">
    <property type="entry name" value="LexA-like"/>
</dbReference>
<dbReference type="InterPro" id="IPR036286">
    <property type="entry name" value="LexA/Signal_pep-like_sf"/>
</dbReference>
<dbReference type="InterPro" id="IPR006199">
    <property type="entry name" value="LexA_DNA-bd_dom"/>
</dbReference>
<dbReference type="InterPro" id="IPR050077">
    <property type="entry name" value="LexA_repressor"/>
</dbReference>
<dbReference type="InterPro" id="IPR006197">
    <property type="entry name" value="Peptidase_S24_LexA"/>
</dbReference>
<dbReference type="InterPro" id="IPR015927">
    <property type="entry name" value="Peptidase_S24_S26A/B/C"/>
</dbReference>
<dbReference type="InterPro" id="IPR036388">
    <property type="entry name" value="WH-like_DNA-bd_sf"/>
</dbReference>
<dbReference type="InterPro" id="IPR036390">
    <property type="entry name" value="WH_DNA-bd_sf"/>
</dbReference>
<dbReference type="NCBIfam" id="TIGR00498">
    <property type="entry name" value="lexA"/>
    <property type="match status" value="1"/>
</dbReference>
<dbReference type="PANTHER" id="PTHR33516">
    <property type="entry name" value="LEXA REPRESSOR"/>
    <property type="match status" value="1"/>
</dbReference>
<dbReference type="PANTHER" id="PTHR33516:SF2">
    <property type="entry name" value="LEXA REPRESSOR-RELATED"/>
    <property type="match status" value="1"/>
</dbReference>
<dbReference type="Pfam" id="PF01726">
    <property type="entry name" value="LexA_DNA_bind"/>
    <property type="match status" value="1"/>
</dbReference>
<dbReference type="Pfam" id="PF00717">
    <property type="entry name" value="Peptidase_S24"/>
    <property type="match status" value="1"/>
</dbReference>
<dbReference type="PRINTS" id="PR00726">
    <property type="entry name" value="LEXASERPTASE"/>
</dbReference>
<dbReference type="SUPFAM" id="SSF51306">
    <property type="entry name" value="LexA/Signal peptidase"/>
    <property type="match status" value="1"/>
</dbReference>
<dbReference type="SUPFAM" id="SSF46785">
    <property type="entry name" value="Winged helix' DNA-binding domain"/>
    <property type="match status" value="1"/>
</dbReference>
<gene>
    <name evidence="1" type="primary">lexA</name>
    <name type="ordered locus">Sfum_0927</name>
</gene>